<gene>
    <name evidence="1" type="primary">panC</name>
    <name type="ordered locus">Cagg_2916</name>
</gene>
<accession>B8G643</accession>
<organism>
    <name type="scientific">Chloroflexus aggregans (strain MD-66 / DSM 9485)</name>
    <dbReference type="NCBI Taxonomy" id="326427"/>
    <lineage>
        <taxon>Bacteria</taxon>
        <taxon>Bacillati</taxon>
        <taxon>Chloroflexota</taxon>
        <taxon>Chloroflexia</taxon>
        <taxon>Chloroflexales</taxon>
        <taxon>Chloroflexineae</taxon>
        <taxon>Chloroflexaceae</taxon>
        <taxon>Chloroflexus</taxon>
    </lineage>
</organism>
<name>PANC_CHLAD</name>
<keyword id="KW-0067">ATP-binding</keyword>
<keyword id="KW-0963">Cytoplasm</keyword>
<keyword id="KW-0436">Ligase</keyword>
<keyword id="KW-0547">Nucleotide-binding</keyword>
<keyword id="KW-0566">Pantothenate biosynthesis</keyword>
<evidence type="ECO:0000255" key="1">
    <source>
        <dbReference type="HAMAP-Rule" id="MF_00158"/>
    </source>
</evidence>
<proteinExistence type="inferred from homology"/>
<reference key="1">
    <citation type="submission" date="2008-12" db="EMBL/GenBank/DDBJ databases">
        <title>Complete sequence of Chloroflexus aggregans DSM 9485.</title>
        <authorList>
            <consortium name="US DOE Joint Genome Institute"/>
            <person name="Lucas S."/>
            <person name="Copeland A."/>
            <person name="Lapidus A."/>
            <person name="Glavina del Rio T."/>
            <person name="Dalin E."/>
            <person name="Tice H."/>
            <person name="Pitluck S."/>
            <person name="Foster B."/>
            <person name="Larimer F."/>
            <person name="Land M."/>
            <person name="Hauser L."/>
            <person name="Kyrpides N."/>
            <person name="Mikhailova N."/>
            <person name="Bryant D.A."/>
            <person name="Richardson P."/>
        </authorList>
    </citation>
    <scope>NUCLEOTIDE SEQUENCE [LARGE SCALE GENOMIC DNA]</scope>
    <source>
        <strain>MD-66 / DSM 9485</strain>
    </source>
</reference>
<sequence length="277" mass="30594">MQVVHTIAEARRARAAFDELGFVPTMGYLHQGHLALVERARAECPAVAVSIFVNPTQFGPHEDYARYPRDTARDLALLEAAGVDLVFIPTVEEMYPAGFGTYVIQPAADEVLEGAARPGHFRGVATVVCKLFNIIQPTKSYFGQKDAQQTVVVRQMVRDLNIPVEIVIVPTVREPDGLALSSRNVYLTPEQRAAAPVLYRALRAAAERYAAGERSGEVLRAVMREVLSTEPLAKPEYVSVAHPHTLRELDQIGPEGALLSMAVRFDQVRLIDNWLLL</sequence>
<comment type="function">
    <text evidence="1">Catalyzes the condensation of pantoate with beta-alanine in an ATP-dependent reaction via a pantoyl-adenylate intermediate.</text>
</comment>
<comment type="catalytic activity">
    <reaction evidence="1">
        <text>(R)-pantoate + beta-alanine + ATP = (R)-pantothenate + AMP + diphosphate + H(+)</text>
        <dbReference type="Rhea" id="RHEA:10912"/>
        <dbReference type="ChEBI" id="CHEBI:15378"/>
        <dbReference type="ChEBI" id="CHEBI:15980"/>
        <dbReference type="ChEBI" id="CHEBI:29032"/>
        <dbReference type="ChEBI" id="CHEBI:30616"/>
        <dbReference type="ChEBI" id="CHEBI:33019"/>
        <dbReference type="ChEBI" id="CHEBI:57966"/>
        <dbReference type="ChEBI" id="CHEBI:456215"/>
        <dbReference type="EC" id="6.3.2.1"/>
    </reaction>
</comment>
<comment type="pathway">
    <text evidence="1">Cofactor biosynthesis; (R)-pantothenate biosynthesis; (R)-pantothenate from (R)-pantoate and beta-alanine: step 1/1.</text>
</comment>
<comment type="subunit">
    <text evidence="1">Homodimer.</text>
</comment>
<comment type="subcellular location">
    <subcellularLocation>
        <location evidence="1">Cytoplasm</location>
    </subcellularLocation>
</comment>
<comment type="miscellaneous">
    <text evidence="1">The reaction proceeds by a bi uni uni bi ping pong mechanism.</text>
</comment>
<comment type="similarity">
    <text evidence="1">Belongs to the pantothenate synthetase family.</text>
</comment>
<protein>
    <recommendedName>
        <fullName evidence="1">Pantothenate synthetase</fullName>
        <shortName evidence="1">PS</shortName>
        <ecNumber evidence="1">6.3.2.1</ecNumber>
    </recommendedName>
    <alternativeName>
        <fullName evidence="1">Pantoate--beta-alanine ligase</fullName>
    </alternativeName>
    <alternativeName>
        <fullName evidence="1">Pantoate-activating enzyme</fullName>
    </alternativeName>
</protein>
<dbReference type="EC" id="6.3.2.1" evidence="1"/>
<dbReference type="EMBL" id="CP001337">
    <property type="protein sequence ID" value="ACL25776.1"/>
    <property type="molecule type" value="Genomic_DNA"/>
</dbReference>
<dbReference type="RefSeq" id="WP_015941632.1">
    <property type="nucleotide sequence ID" value="NC_011831.1"/>
</dbReference>
<dbReference type="SMR" id="B8G643"/>
<dbReference type="STRING" id="326427.Cagg_2916"/>
<dbReference type="KEGG" id="cag:Cagg_2916"/>
<dbReference type="eggNOG" id="COG0414">
    <property type="taxonomic scope" value="Bacteria"/>
</dbReference>
<dbReference type="HOGENOM" id="CLU_047148_0_0_0"/>
<dbReference type="OrthoDB" id="9773087at2"/>
<dbReference type="UniPathway" id="UPA00028">
    <property type="reaction ID" value="UER00005"/>
</dbReference>
<dbReference type="Proteomes" id="UP000002508">
    <property type="component" value="Chromosome"/>
</dbReference>
<dbReference type="GO" id="GO:0005829">
    <property type="term" value="C:cytosol"/>
    <property type="evidence" value="ECO:0007669"/>
    <property type="project" value="TreeGrafter"/>
</dbReference>
<dbReference type="GO" id="GO:0005524">
    <property type="term" value="F:ATP binding"/>
    <property type="evidence" value="ECO:0007669"/>
    <property type="project" value="UniProtKB-KW"/>
</dbReference>
<dbReference type="GO" id="GO:0004592">
    <property type="term" value="F:pantoate-beta-alanine ligase activity"/>
    <property type="evidence" value="ECO:0007669"/>
    <property type="project" value="UniProtKB-UniRule"/>
</dbReference>
<dbReference type="GO" id="GO:0015940">
    <property type="term" value="P:pantothenate biosynthetic process"/>
    <property type="evidence" value="ECO:0007669"/>
    <property type="project" value="UniProtKB-UniRule"/>
</dbReference>
<dbReference type="CDD" id="cd00560">
    <property type="entry name" value="PanC"/>
    <property type="match status" value="1"/>
</dbReference>
<dbReference type="FunFam" id="3.40.50.620:FF:000013">
    <property type="entry name" value="Pantothenate synthetase"/>
    <property type="match status" value="1"/>
</dbReference>
<dbReference type="Gene3D" id="3.40.50.620">
    <property type="entry name" value="HUPs"/>
    <property type="match status" value="1"/>
</dbReference>
<dbReference type="Gene3D" id="3.30.1300.10">
    <property type="entry name" value="Pantoate-beta-alanine ligase, C-terminal domain"/>
    <property type="match status" value="1"/>
</dbReference>
<dbReference type="HAMAP" id="MF_00158">
    <property type="entry name" value="PanC"/>
    <property type="match status" value="1"/>
</dbReference>
<dbReference type="InterPro" id="IPR004821">
    <property type="entry name" value="Cyt_trans-like"/>
</dbReference>
<dbReference type="InterPro" id="IPR003721">
    <property type="entry name" value="Pantoate_ligase"/>
</dbReference>
<dbReference type="InterPro" id="IPR042176">
    <property type="entry name" value="Pantoate_ligase_C"/>
</dbReference>
<dbReference type="InterPro" id="IPR014729">
    <property type="entry name" value="Rossmann-like_a/b/a_fold"/>
</dbReference>
<dbReference type="NCBIfam" id="TIGR00125">
    <property type="entry name" value="cyt_tran_rel"/>
    <property type="match status" value="1"/>
</dbReference>
<dbReference type="NCBIfam" id="TIGR00018">
    <property type="entry name" value="panC"/>
    <property type="match status" value="1"/>
</dbReference>
<dbReference type="PANTHER" id="PTHR21299">
    <property type="entry name" value="CYTIDYLATE KINASE/PANTOATE-BETA-ALANINE LIGASE"/>
    <property type="match status" value="1"/>
</dbReference>
<dbReference type="PANTHER" id="PTHR21299:SF1">
    <property type="entry name" value="PANTOATE--BETA-ALANINE LIGASE"/>
    <property type="match status" value="1"/>
</dbReference>
<dbReference type="Pfam" id="PF02569">
    <property type="entry name" value="Pantoate_ligase"/>
    <property type="match status" value="1"/>
</dbReference>
<dbReference type="SUPFAM" id="SSF52374">
    <property type="entry name" value="Nucleotidylyl transferase"/>
    <property type="match status" value="1"/>
</dbReference>
<feature type="chain" id="PRO_1000123405" description="Pantothenate synthetase">
    <location>
        <begin position="1"/>
        <end position="277"/>
    </location>
</feature>
<feature type="active site" description="Proton donor" evidence="1">
    <location>
        <position position="33"/>
    </location>
</feature>
<feature type="binding site" evidence="1">
    <location>
        <begin position="26"/>
        <end position="33"/>
    </location>
    <ligand>
        <name>ATP</name>
        <dbReference type="ChEBI" id="CHEBI:30616"/>
    </ligand>
</feature>
<feature type="binding site" evidence="1">
    <location>
        <position position="57"/>
    </location>
    <ligand>
        <name>(R)-pantoate</name>
        <dbReference type="ChEBI" id="CHEBI:15980"/>
    </ligand>
</feature>
<feature type="binding site" evidence="1">
    <location>
        <position position="57"/>
    </location>
    <ligand>
        <name>beta-alanine</name>
        <dbReference type="ChEBI" id="CHEBI:57966"/>
    </ligand>
</feature>
<feature type="binding site" evidence="1">
    <location>
        <begin position="143"/>
        <end position="146"/>
    </location>
    <ligand>
        <name>ATP</name>
        <dbReference type="ChEBI" id="CHEBI:30616"/>
    </ligand>
</feature>
<feature type="binding site" evidence="1">
    <location>
        <position position="149"/>
    </location>
    <ligand>
        <name>(R)-pantoate</name>
        <dbReference type="ChEBI" id="CHEBI:15980"/>
    </ligand>
</feature>
<feature type="binding site" evidence="1">
    <location>
        <position position="172"/>
    </location>
    <ligand>
        <name>ATP</name>
        <dbReference type="ChEBI" id="CHEBI:30616"/>
    </ligand>
</feature>
<feature type="binding site" evidence="1">
    <location>
        <begin position="180"/>
        <end position="183"/>
    </location>
    <ligand>
        <name>ATP</name>
        <dbReference type="ChEBI" id="CHEBI:30616"/>
    </ligand>
</feature>